<evidence type="ECO:0000250" key="1">
    <source>
        <dbReference type="UniProtKB" id="Q9UBP0"/>
    </source>
</evidence>
<evidence type="ECO:0000255" key="2"/>
<evidence type="ECO:0000255" key="3">
    <source>
        <dbReference type="HAMAP-Rule" id="MF_03021"/>
    </source>
</evidence>
<evidence type="ECO:0000256" key="4">
    <source>
        <dbReference type="SAM" id="MobiDB-lite"/>
    </source>
</evidence>
<evidence type="ECO:0000269" key="5">
    <source>
    </source>
</evidence>
<sequence length="614" mass="67225">MNSPGGRGKKKGSGGPSSPVPPRPPPPCQARSRPAPKPAPPPQSPHKRNLYYFSYPLFLGFALLRLVAFHLGLLFVWLCQRFSRALMAAKRSSGAAPASASPPAPVPGGEAERVRAFHKQAFEYISVALRIDEDEKVGQKDQAVEWYKKGIEELEKGIAVVVTGQGEQCERARRLQAKMMTNLVMAKDRLQLLEKLQPSLQFSKSQTDVYNDSTNLTCRNGHLQSESGAVPKRKDPLTHASNSLPRSKTVMKTGPTGLSGHHRAPSCSGLSMVSGVRQGPGSAAATHKSTPKTNRTNKPSTPTTAARKKKDLKNFRNVDSNLANLIMNEIVDNGTAVKFDDIAGQELAKQALQEIVILPSLRPELFTGLRAPARGLLLFGPPGNGKTMLAKAVAAESNATFFNISAASLTSKYVGEGEKLVRALFAVARELQPSIIFIDEVDSLLCERREGEHDASRRLKTEFLIEFDGVQSAGDDRVLVMGATNRPQELDEAVLRRFTKRVYVSLPNEETRLLLLKNLLCKQGSPLTQKELAQLARMTNGYSGSDLTALAKDAALGPIRELKPEQVKNMSASEMRNIRLSDFTESLKKIKRSVSPQTLEAYIRWNKDFGDTTV</sequence>
<gene>
    <name evidence="3" type="primary">SPAST</name>
    <name evidence="3" type="synonym">SPG4</name>
</gene>
<keyword id="KW-0021">Allosteric enzyme</keyword>
<keyword id="KW-0067">ATP-binding</keyword>
<keyword id="KW-0131">Cell cycle</keyword>
<keyword id="KW-0132">Cell division</keyword>
<keyword id="KW-0966">Cell projection</keyword>
<keyword id="KW-0963">Cytoplasm</keyword>
<keyword id="KW-0206">Cytoskeleton</keyword>
<keyword id="KW-0217">Developmental protein</keyword>
<keyword id="KW-0221">Differentiation</keyword>
<keyword id="KW-0225">Disease variant</keyword>
<keyword id="KW-0256">Endoplasmic reticulum</keyword>
<keyword id="KW-0413">Isomerase</keyword>
<keyword id="KW-0472">Membrane</keyword>
<keyword id="KW-0493">Microtubule</keyword>
<keyword id="KW-0524">Neurogenesis</keyword>
<keyword id="KW-0547">Nucleotide-binding</keyword>
<keyword id="KW-0539">Nucleus</keyword>
<keyword id="KW-0597">Phosphoprotein</keyword>
<keyword id="KW-1185">Reference proteome</keyword>
<protein>
    <recommendedName>
        <fullName evidence="3">Spastin</fullName>
        <ecNumber evidence="3">5.6.1.1</ecNumber>
    </recommendedName>
</protein>
<feature type="chain" id="PRO_0000367133" description="Spastin">
    <location>
        <begin position="1"/>
        <end position="614"/>
    </location>
</feature>
<feature type="topological domain" description="Cytoplasmic" evidence="3">
    <location>
        <begin position="1"/>
        <end position="56"/>
    </location>
</feature>
<feature type="intramembrane region" description="Helical" evidence="3">
    <location>
        <begin position="57"/>
        <end position="77"/>
    </location>
</feature>
<feature type="topological domain" description="Cytoplasmic" evidence="3">
    <location>
        <begin position="78"/>
        <end position="614"/>
    </location>
</feature>
<feature type="domain" description="MIT" evidence="2">
    <location>
        <begin position="118"/>
        <end position="193"/>
    </location>
</feature>
<feature type="region of interest" description="Required for interaction with RTN1" evidence="1">
    <location>
        <begin position="1"/>
        <end position="298"/>
    </location>
</feature>
<feature type="region of interest" description="Required for midbody localization" evidence="1">
    <location>
        <begin position="1"/>
        <end position="192"/>
    </location>
</feature>
<feature type="region of interest" description="Required for interaction with ATL1" evidence="1">
    <location>
        <begin position="1"/>
        <end position="80"/>
    </location>
</feature>
<feature type="region of interest" description="Required for nuclear localization" evidence="1">
    <location>
        <begin position="1"/>
        <end position="50"/>
    </location>
</feature>
<feature type="region of interest" description="Disordered" evidence="4">
    <location>
        <begin position="1"/>
        <end position="45"/>
    </location>
</feature>
<feature type="region of interest" description="Required for interaction with SSNA1 and microtubules" evidence="1">
    <location>
        <begin position="50"/>
        <end position="87"/>
    </location>
</feature>
<feature type="region of interest" description="Sufficient for interaction with CHMP1B" evidence="1">
    <location>
        <begin position="110"/>
        <end position="194"/>
    </location>
</feature>
<feature type="region of interest" description="Required for interaction with microtubules" evidence="1">
    <location>
        <begin position="112"/>
        <end position="198"/>
    </location>
</feature>
<feature type="region of interest" description="Disordered" evidence="4">
    <location>
        <begin position="220"/>
        <end position="310"/>
    </location>
</feature>
<feature type="region of interest" description="Sufficient for microtubule severing" evidence="1">
    <location>
        <begin position="226"/>
        <end position="614"/>
    </location>
</feature>
<feature type="region of interest" description="Required for interaction with microtubules and microtubule severing" evidence="1">
    <location>
        <begin position="268"/>
        <end position="326"/>
    </location>
</feature>
<feature type="short sequence motif" description="Nuclear localization signal" evidence="3">
    <location>
        <begin position="4"/>
        <end position="11"/>
    </location>
</feature>
<feature type="short sequence motif" description="Nuclear export signal" evidence="3">
    <location>
        <begin position="59"/>
        <end position="67"/>
    </location>
</feature>
<feature type="short sequence motif" description="Nuclear localization signal" evidence="3">
    <location>
        <begin position="307"/>
        <end position="310"/>
    </location>
</feature>
<feature type="compositionally biased region" description="Pro residues" evidence="4">
    <location>
        <begin position="18"/>
        <end position="28"/>
    </location>
</feature>
<feature type="compositionally biased region" description="Pro residues" evidence="4">
    <location>
        <begin position="35"/>
        <end position="44"/>
    </location>
</feature>
<feature type="compositionally biased region" description="Polar residues" evidence="4">
    <location>
        <begin position="287"/>
        <end position="304"/>
    </location>
</feature>
<feature type="binding site" evidence="3">
    <location>
        <begin position="380"/>
        <end position="387"/>
    </location>
    <ligand>
        <name>ATP</name>
        <dbReference type="ChEBI" id="CHEBI:30616"/>
    </ligand>
</feature>
<feature type="modified residue" description="Phosphoserine" evidence="1">
    <location>
        <position position="243"/>
    </location>
</feature>
<feature type="modified residue" description="Phosphoserine" evidence="1">
    <location>
        <position position="266"/>
    </location>
</feature>
<feature type="modified residue" description="Phosphothreonine" evidence="1">
    <location>
        <position position="304"/>
    </location>
</feature>
<feature type="modified residue" description="Phosphoserine" evidence="1">
    <location>
        <position position="595"/>
    </location>
</feature>
<feature type="sequence variant" description="In BSD." evidence="5">
    <original>R</original>
    <variation>Q</variation>
    <location>
        <position position="560"/>
    </location>
</feature>
<name>SPAST_BOVIN</name>
<organism>
    <name type="scientific">Bos taurus</name>
    <name type="common">Bovine</name>
    <dbReference type="NCBI Taxonomy" id="9913"/>
    <lineage>
        <taxon>Eukaryota</taxon>
        <taxon>Metazoa</taxon>
        <taxon>Chordata</taxon>
        <taxon>Craniata</taxon>
        <taxon>Vertebrata</taxon>
        <taxon>Euteleostomi</taxon>
        <taxon>Mammalia</taxon>
        <taxon>Eutheria</taxon>
        <taxon>Laurasiatheria</taxon>
        <taxon>Artiodactyla</taxon>
        <taxon>Ruminantia</taxon>
        <taxon>Pecora</taxon>
        <taxon>Bovidae</taxon>
        <taxon>Bovinae</taxon>
        <taxon>Bos</taxon>
    </lineage>
</organism>
<accession>A2VDN5</accession>
<reference key="1">
    <citation type="submission" date="2007-02" db="EMBL/GenBank/DDBJ databases">
        <authorList>
            <consortium name="NIH - Mammalian Gene Collection (MGC) project"/>
        </authorList>
    </citation>
    <scope>NUCLEOTIDE SEQUENCE [LARGE SCALE MRNA]</scope>
    <source>
        <strain>Hereford</strain>
        <tissue>Brain cortex</tissue>
    </source>
</reference>
<reference key="2">
    <citation type="journal article" date="2010" name="Neurogenetics">
        <title>Congenital bovine spinal dysmyelination is caused by a missense mutation in the SPAST gene.</title>
        <authorList>
            <person name="Thomsen B."/>
            <person name="Nissen P.H."/>
            <person name="Agerholm J.S."/>
            <person name="Bendixen C."/>
        </authorList>
    </citation>
    <scope>INVOLVEMENT IN BSD</scope>
    <scope>VARIANT BSD GLN-560</scope>
</reference>
<comment type="function">
    <text evidence="3">ATP-dependent microtubule severing protein that specifically recognizes and cuts microtubules that are polyglutamylated. Preferentially recognizes and acts on microtubules decorated with short polyglutamate tails: severing activity increases as the number of glutamates per tubulin rises from one to eight, but decreases beyond this glutamylation threshold. Severing activity is not dependent on tubulin acetylation or detyrosination. Microtubule severing promotes reorganization of cellular microtubule arrays and the release of microtubules from the centrosome following nucleation. It is critical for the biogenesis and maintenance of complex microtubule arrays in axons, spindles and cilia. SPAST is involved in abscission step of cytokinesis and nuclear envelope reassembly during anaphase in cooperation with the ESCRT-III complex. Recruited at the midbody, probably by IST1, and participates in membrane fission during abscission together with the ESCRT-III complex. Recruited to the nuclear membrane by IST1 and mediates microtubule severing, promoting nuclear envelope sealing and mitotic spindle disassembly during late anaphase. Required for membrane traffic from the endoplasmic reticulum (ER) to the Golgi and endosome recycling. Recruited by IST1 to endosomes and regulates early endosomal tubulation and recycling by mediating microtubule severing. Probably plays a role in axon growth and the formation of axonal branches.</text>
</comment>
<comment type="catalytic activity">
    <reaction evidence="3">
        <text>n ATP + n H2O + a microtubule = n ADP + n phosphate + (n+1) alpha/beta tubulin heterodimers.</text>
        <dbReference type="EC" id="5.6.1.1"/>
    </reaction>
</comment>
<comment type="activity regulation">
    <text evidence="3">Allosteric enzyme with a cooperative mechanism; at least two neighbor subunits influence each other strongly in spastin hexamers. Microtubule binding promotes cooperative interactions among spastin subunits.</text>
</comment>
<comment type="subunit">
    <text evidence="3">Homohexamer. Mostly monomeric, but assembles into hexameric structure for short periods of time. Oligomerization seems to be a prerequisite for catalytic activity. Binding to ATP in a cleft between two adjacent subunits stabilizes the homohexameric form. Binds to microtubules at least in part via the alpha-tubulin and beta-tubulin tails. The hexamer adopts a ring conformation through which microtubules pass prior to being severed. Does not interact strongly with tubulin heterodimers. Interacts (via MIT domain) with CHMP1B; the interaction is direct. Interacts with SSNA1. Interacts with ATL1. Interacts with RTN1. Interacts with ZFYVE27. Interacts with REEP1. Interacts (via MIT domain) with IST1.</text>
</comment>
<comment type="subcellular location">
    <subcellularLocation>
        <location evidence="3">Membrane</location>
        <topology evidence="3">Peripheral membrane protein</topology>
    </subcellularLocation>
    <subcellularLocation>
        <location evidence="3">Endoplasmic reticulum</location>
    </subcellularLocation>
    <subcellularLocation>
        <location evidence="3">Midbody</location>
    </subcellularLocation>
    <subcellularLocation>
        <location evidence="3">Cytoplasm</location>
        <location evidence="3">Cytoskeleton</location>
        <location evidence="3">Microtubule organizing center</location>
        <location evidence="3">Centrosome</location>
    </subcellularLocation>
    <subcellularLocation>
        <location evidence="3">Cytoplasm</location>
        <location evidence="3">Cytoskeleton</location>
    </subcellularLocation>
    <subcellularLocation>
        <location evidence="3">Cytoplasm</location>
        <location evidence="3">Perinuclear region</location>
    </subcellularLocation>
    <subcellularLocation>
        <location evidence="3">Nucleus</location>
    </subcellularLocation>
    <subcellularLocation>
        <location evidence="3">Cytoplasm</location>
        <location evidence="3">Cytoskeleton</location>
        <location evidence="3">Spindle</location>
    </subcellularLocation>
    <subcellularLocation>
        <location evidence="3">Cytoplasm</location>
    </subcellularLocation>
    <subcellularLocation>
        <location evidence="1">Cell projection</location>
        <location evidence="1">Axon</location>
    </subcellularLocation>
    <text evidence="1 3">Forms an intramembrane hairpin-like structure in the membrane. Localization to the centrosome is independent of microtubules. Localizes to the midbody of dividing cells, and this requires CHMP1B. Enriched in the distal axons and branches of postmitotic neurons. Localizes to endoplasmic reticulum tubular network. Mainly nuclear in interphase cells and becomes associated with the centrosomes, spindle microtubules, midzone and finally the midbody during cell division (By similarity).</text>
</comment>
<comment type="disease">
    <text evidence="5">Defects in SPAST are the cause of bovine spinal dysmyelination (BSD), a neurodegenerative disorder characterized by pathological changes of the myelin sheaths in the spinal cord. Defects appear immediately at birth and include lateral recumbency with slight to moderate opisthotonos, body tremor, and spastic extension of the limbs. General muscle atrophy due to denervation occurs to variable degrees and is most obvious in the hind limbs. BSD is a longstanding problem in the American Brown Swiss (ABS) breed and in several European cattle breeds upgraded with ABS. The morphological cause of the phenotype is bilateral symmetrical hypo- and demyelination of axons in the cervical and thoracic segments of the spinal cord. The disease is caused by variants affecting the gene represented in this entry.</text>
</comment>
<comment type="similarity">
    <text evidence="3">Belongs to the AAA ATPase family. Spastin subfamily.</text>
</comment>
<dbReference type="EC" id="5.6.1.1" evidence="3"/>
<dbReference type="EMBL" id="BC133327">
    <property type="protein sequence ID" value="AAI33328.1"/>
    <property type="molecule type" value="mRNA"/>
</dbReference>
<dbReference type="RefSeq" id="NP_001075060.1">
    <property type="nucleotide sequence ID" value="NM_001081591.1"/>
</dbReference>
<dbReference type="SMR" id="A2VDN5"/>
<dbReference type="FunCoup" id="A2VDN5">
    <property type="interactions" value="4549"/>
</dbReference>
<dbReference type="STRING" id="9913.ENSBTAP00000044166"/>
<dbReference type="PaxDb" id="9913-ENSBTAP00000044166"/>
<dbReference type="Ensembl" id="ENSBTAT00000046919.4">
    <property type="protein sequence ID" value="ENSBTAP00000044166.3"/>
    <property type="gene ID" value="ENSBTAG00000021694.7"/>
</dbReference>
<dbReference type="GeneID" id="521442"/>
<dbReference type="KEGG" id="bta:521442"/>
<dbReference type="CTD" id="6683"/>
<dbReference type="VEuPathDB" id="HostDB:ENSBTAG00000021694"/>
<dbReference type="VGNC" id="VGNC:35174">
    <property type="gene designation" value="SPAST"/>
</dbReference>
<dbReference type="eggNOG" id="KOG0740">
    <property type="taxonomic scope" value="Eukaryota"/>
</dbReference>
<dbReference type="GeneTree" id="ENSGT00940000156258"/>
<dbReference type="HOGENOM" id="CLU_000688_21_5_1"/>
<dbReference type="InParanoid" id="A2VDN5"/>
<dbReference type="OMA" id="KSREPML"/>
<dbReference type="OrthoDB" id="10251136at2759"/>
<dbReference type="TreeFam" id="TF105014"/>
<dbReference type="Reactome" id="R-BTA-9668328">
    <property type="pathway name" value="Sealing of the nuclear envelope (NE) by ESCRT-III"/>
</dbReference>
<dbReference type="Proteomes" id="UP000009136">
    <property type="component" value="Chromosome 11"/>
</dbReference>
<dbReference type="Bgee" id="ENSBTAG00000021694">
    <property type="expression patterns" value="Expressed in spermatocyte and 106 other cell types or tissues"/>
</dbReference>
<dbReference type="GO" id="GO:0030424">
    <property type="term" value="C:axon"/>
    <property type="evidence" value="ECO:0000250"/>
    <property type="project" value="UniProtKB"/>
</dbReference>
<dbReference type="GO" id="GO:1904115">
    <property type="term" value="C:axon cytoplasm"/>
    <property type="evidence" value="ECO:0007669"/>
    <property type="project" value="GOC"/>
</dbReference>
<dbReference type="GO" id="GO:0005813">
    <property type="term" value="C:centrosome"/>
    <property type="evidence" value="ECO:0007669"/>
    <property type="project" value="UniProtKB-SubCell"/>
</dbReference>
<dbReference type="GO" id="GO:0005829">
    <property type="term" value="C:cytosol"/>
    <property type="evidence" value="ECO:0007669"/>
    <property type="project" value="Ensembl"/>
</dbReference>
<dbReference type="GO" id="GO:0005783">
    <property type="term" value="C:endoplasmic reticulum"/>
    <property type="evidence" value="ECO:0007669"/>
    <property type="project" value="UniProtKB-SubCell"/>
</dbReference>
<dbReference type="GO" id="GO:0005768">
    <property type="term" value="C:endosome"/>
    <property type="evidence" value="ECO:0007669"/>
    <property type="project" value="UniProtKB-UniRule"/>
</dbReference>
<dbReference type="GO" id="GO:0005874">
    <property type="term" value="C:microtubule"/>
    <property type="evidence" value="ECO:0007669"/>
    <property type="project" value="UniProtKB-UniRule"/>
</dbReference>
<dbReference type="GO" id="GO:0015630">
    <property type="term" value="C:microtubule cytoskeleton"/>
    <property type="evidence" value="ECO:0000318"/>
    <property type="project" value="GO_Central"/>
</dbReference>
<dbReference type="GO" id="GO:0030496">
    <property type="term" value="C:midbody"/>
    <property type="evidence" value="ECO:0007669"/>
    <property type="project" value="UniProtKB-SubCell"/>
</dbReference>
<dbReference type="GO" id="GO:0031965">
    <property type="term" value="C:nuclear membrane"/>
    <property type="evidence" value="ECO:0000250"/>
    <property type="project" value="UniProtKB"/>
</dbReference>
<dbReference type="GO" id="GO:0005654">
    <property type="term" value="C:nucleoplasm"/>
    <property type="evidence" value="ECO:0007669"/>
    <property type="project" value="Ensembl"/>
</dbReference>
<dbReference type="GO" id="GO:0005634">
    <property type="term" value="C:nucleus"/>
    <property type="evidence" value="ECO:0000250"/>
    <property type="project" value="UniProtKB"/>
</dbReference>
<dbReference type="GO" id="GO:0048471">
    <property type="term" value="C:perinuclear region of cytoplasm"/>
    <property type="evidence" value="ECO:0007669"/>
    <property type="project" value="UniProtKB-SubCell"/>
</dbReference>
<dbReference type="GO" id="GO:0000922">
    <property type="term" value="C:spindle pole"/>
    <property type="evidence" value="ECO:0000250"/>
    <property type="project" value="UniProtKB"/>
</dbReference>
<dbReference type="GO" id="GO:0043014">
    <property type="term" value="F:alpha-tubulin binding"/>
    <property type="evidence" value="ECO:0000250"/>
    <property type="project" value="UniProtKB"/>
</dbReference>
<dbReference type="GO" id="GO:0005524">
    <property type="term" value="F:ATP binding"/>
    <property type="evidence" value="ECO:0007669"/>
    <property type="project" value="UniProtKB-UniRule"/>
</dbReference>
<dbReference type="GO" id="GO:0016887">
    <property type="term" value="F:ATP hydrolysis activity"/>
    <property type="evidence" value="ECO:0000318"/>
    <property type="project" value="GO_Central"/>
</dbReference>
<dbReference type="GO" id="GO:0048487">
    <property type="term" value="F:beta-tubulin binding"/>
    <property type="evidence" value="ECO:0000250"/>
    <property type="project" value="UniProtKB"/>
</dbReference>
<dbReference type="GO" id="GO:0008017">
    <property type="term" value="F:microtubule binding"/>
    <property type="evidence" value="ECO:0000250"/>
    <property type="project" value="UniProtKB"/>
</dbReference>
<dbReference type="GO" id="GO:0008568">
    <property type="term" value="F:microtubule severing ATPase activity"/>
    <property type="evidence" value="ECO:0000250"/>
    <property type="project" value="UniProtKB"/>
</dbReference>
<dbReference type="GO" id="GO:0008089">
    <property type="term" value="P:anterograde axonal transport"/>
    <property type="evidence" value="ECO:0000250"/>
    <property type="project" value="UniProtKB"/>
</dbReference>
<dbReference type="GO" id="GO:0019896">
    <property type="term" value="P:axonal transport of mitochondrion"/>
    <property type="evidence" value="ECO:0000250"/>
    <property type="project" value="UniProtKB"/>
</dbReference>
<dbReference type="GO" id="GO:0007409">
    <property type="term" value="P:axonogenesis"/>
    <property type="evidence" value="ECO:0007669"/>
    <property type="project" value="UniProtKB-UniRule"/>
</dbReference>
<dbReference type="GO" id="GO:0032506">
    <property type="term" value="P:cytokinetic process"/>
    <property type="evidence" value="ECO:0000250"/>
    <property type="project" value="UniProtKB"/>
</dbReference>
<dbReference type="GO" id="GO:0006888">
    <property type="term" value="P:endoplasmic reticulum to Golgi vesicle-mediated transport"/>
    <property type="evidence" value="ECO:0000250"/>
    <property type="project" value="UniProtKB"/>
</dbReference>
<dbReference type="GO" id="GO:0010458">
    <property type="term" value="P:exit from mitosis"/>
    <property type="evidence" value="ECO:0000250"/>
    <property type="project" value="UniProtKB"/>
</dbReference>
<dbReference type="GO" id="GO:0090148">
    <property type="term" value="P:membrane fission"/>
    <property type="evidence" value="ECO:0000250"/>
    <property type="project" value="UniProtKB"/>
</dbReference>
<dbReference type="GO" id="GO:0001578">
    <property type="term" value="P:microtubule bundle formation"/>
    <property type="evidence" value="ECO:0000250"/>
    <property type="project" value="UniProtKB"/>
</dbReference>
<dbReference type="GO" id="GO:0051013">
    <property type="term" value="P:microtubule severing"/>
    <property type="evidence" value="ECO:0000250"/>
    <property type="project" value="UniProtKB"/>
</dbReference>
<dbReference type="GO" id="GO:0000281">
    <property type="term" value="P:mitotic cytokinesis"/>
    <property type="evidence" value="ECO:0000250"/>
    <property type="project" value="UniProtKB"/>
</dbReference>
<dbReference type="GO" id="GO:0051228">
    <property type="term" value="P:mitotic spindle disassembly"/>
    <property type="evidence" value="ECO:0000250"/>
    <property type="project" value="UniProtKB"/>
</dbReference>
<dbReference type="GO" id="GO:0031468">
    <property type="term" value="P:nuclear membrane reassembly"/>
    <property type="evidence" value="ECO:0000250"/>
    <property type="project" value="UniProtKB"/>
</dbReference>
<dbReference type="GO" id="GO:0032467">
    <property type="term" value="P:positive regulation of cytokinesis"/>
    <property type="evidence" value="ECO:0007669"/>
    <property type="project" value="Ensembl"/>
</dbReference>
<dbReference type="GO" id="GO:0031117">
    <property type="term" value="P:positive regulation of microtubule depolymerization"/>
    <property type="evidence" value="ECO:0007669"/>
    <property type="project" value="UniProtKB-UniRule"/>
</dbReference>
<dbReference type="GO" id="GO:0034214">
    <property type="term" value="P:protein hexamerization"/>
    <property type="evidence" value="ECO:0000250"/>
    <property type="project" value="UniProtKB"/>
</dbReference>
<dbReference type="GO" id="GO:0051260">
    <property type="term" value="P:protein homooligomerization"/>
    <property type="evidence" value="ECO:0000250"/>
    <property type="project" value="UniProtKB"/>
</dbReference>
<dbReference type="CDD" id="cd02679">
    <property type="entry name" value="MIT_spastin"/>
    <property type="match status" value="1"/>
</dbReference>
<dbReference type="CDD" id="cd19524">
    <property type="entry name" value="RecA-like_spastin"/>
    <property type="match status" value="1"/>
</dbReference>
<dbReference type="FunFam" id="3.40.50.300:FF:000093">
    <property type="entry name" value="Fidgetin-like 1"/>
    <property type="match status" value="1"/>
</dbReference>
<dbReference type="FunFam" id="1.10.8.60:FF:000036">
    <property type="entry name" value="Spastin"/>
    <property type="match status" value="1"/>
</dbReference>
<dbReference type="FunFam" id="1.20.58.80:FF:000006">
    <property type="entry name" value="Spastin"/>
    <property type="match status" value="1"/>
</dbReference>
<dbReference type="Gene3D" id="1.10.8.60">
    <property type="match status" value="1"/>
</dbReference>
<dbReference type="Gene3D" id="3.40.50.300">
    <property type="entry name" value="P-loop containing nucleotide triphosphate hydrolases"/>
    <property type="match status" value="1"/>
</dbReference>
<dbReference type="Gene3D" id="1.20.58.80">
    <property type="entry name" value="Phosphotransferase system, lactose/cellobiose-type IIA subunit"/>
    <property type="match status" value="1"/>
</dbReference>
<dbReference type="HAMAP" id="MF_03021">
    <property type="entry name" value="Spastin"/>
    <property type="match status" value="1"/>
</dbReference>
<dbReference type="InterPro" id="IPR003593">
    <property type="entry name" value="AAA+_ATPase"/>
</dbReference>
<dbReference type="InterPro" id="IPR041569">
    <property type="entry name" value="AAA_lid_3"/>
</dbReference>
<dbReference type="InterPro" id="IPR003959">
    <property type="entry name" value="ATPase_AAA_core"/>
</dbReference>
<dbReference type="InterPro" id="IPR003960">
    <property type="entry name" value="ATPase_AAA_CS"/>
</dbReference>
<dbReference type="InterPro" id="IPR007330">
    <property type="entry name" value="MIT_dom"/>
</dbReference>
<dbReference type="InterPro" id="IPR050304">
    <property type="entry name" value="MT-severing_AAA_ATPase"/>
</dbReference>
<dbReference type="InterPro" id="IPR027417">
    <property type="entry name" value="P-loop_NTPase"/>
</dbReference>
<dbReference type="InterPro" id="IPR015415">
    <property type="entry name" value="Spast_Vps4_C"/>
</dbReference>
<dbReference type="InterPro" id="IPR017179">
    <property type="entry name" value="Spastin"/>
</dbReference>
<dbReference type="InterPro" id="IPR035106">
    <property type="entry name" value="Spastin_chordate"/>
</dbReference>
<dbReference type="PANTHER" id="PTHR23074">
    <property type="entry name" value="AAA DOMAIN-CONTAINING"/>
    <property type="match status" value="1"/>
</dbReference>
<dbReference type="PANTHER" id="PTHR23074:SF86">
    <property type="entry name" value="SPASTIN"/>
    <property type="match status" value="1"/>
</dbReference>
<dbReference type="Pfam" id="PF00004">
    <property type="entry name" value="AAA"/>
    <property type="match status" value="1"/>
</dbReference>
<dbReference type="Pfam" id="PF17862">
    <property type="entry name" value="AAA_lid_3"/>
    <property type="match status" value="1"/>
</dbReference>
<dbReference type="Pfam" id="PF09336">
    <property type="entry name" value="Vps4_C"/>
    <property type="match status" value="1"/>
</dbReference>
<dbReference type="PIRSF" id="PIRSF037338">
    <property type="entry name" value="Spastin"/>
    <property type="match status" value="1"/>
</dbReference>
<dbReference type="SMART" id="SM00382">
    <property type="entry name" value="AAA"/>
    <property type="match status" value="1"/>
</dbReference>
<dbReference type="SMART" id="SM00745">
    <property type="entry name" value="MIT"/>
    <property type="match status" value="1"/>
</dbReference>
<dbReference type="SUPFAM" id="SSF52540">
    <property type="entry name" value="P-loop containing nucleoside triphosphate hydrolases"/>
    <property type="match status" value="1"/>
</dbReference>
<dbReference type="PROSITE" id="PS00674">
    <property type="entry name" value="AAA"/>
    <property type="match status" value="1"/>
</dbReference>
<proteinExistence type="evidence at protein level"/>